<keyword id="KW-0093">Biotin biosynthesis</keyword>
<keyword id="KW-0663">Pyridoxal phosphate</keyword>
<keyword id="KW-1185">Reference proteome</keyword>
<keyword id="KW-0808">Transferase</keyword>
<evidence type="ECO:0000255" key="1">
    <source>
        <dbReference type="HAMAP-Rule" id="MF_01693"/>
    </source>
</evidence>
<evidence type="ECO:0000305" key="2"/>
<organism>
    <name type="scientific">Polaromonas naphthalenivorans (strain CJ2)</name>
    <dbReference type="NCBI Taxonomy" id="365044"/>
    <lineage>
        <taxon>Bacteria</taxon>
        <taxon>Pseudomonadati</taxon>
        <taxon>Pseudomonadota</taxon>
        <taxon>Betaproteobacteria</taxon>
        <taxon>Burkholderiales</taxon>
        <taxon>Comamonadaceae</taxon>
        <taxon>Polaromonas</taxon>
    </lineage>
</organism>
<gene>
    <name evidence="1" type="primary">bioF</name>
    <name type="ordered locus">Pnap_4032</name>
</gene>
<reference key="1">
    <citation type="journal article" date="2009" name="Environ. Microbiol.">
        <title>The genome of Polaromonas naphthalenivorans strain CJ2, isolated from coal tar-contaminated sediment, reveals physiological and metabolic versatility and evolution through extensive horizontal gene transfer.</title>
        <authorList>
            <person name="Yagi J.M."/>
            <person name="Sims D."/>
            <person name="Brettin T."/>
            <person name="Bruce D."/>
            <person name="Madsen E.L."/>
        </authorList>
    </citation>
    <scope>NUCLEOTIDE SEQUENCE [LARGE SCALE GENOMIC DNA]</scope>
    <source>
        <strain>CJ2</strain>
    </source>
</reference>
<sequence length="409" mass="43052">MLIDYLNHQLREREAQGLTRQRRIAESPCAPRQRVSQRGQPARDLLAFCSNDYLGLANHPALVRALAEGAQLYGAGSGASHLISGHSEAHAALEADLAAWLAPCIPNAQALYFCTGYMANLALLTALGGANATIFADKLNHASLVDGALLAKATLQRYAHKSLAVLARQLAACDTPIKLIVTDAVFSMDGDVADLPELLALAERFDAWLVVDDAHGFGVLGEEGRGSLSHFGLCSERLICMGTLGKAAGVGGAFVAAHPSIIDWLVQTARPYIYTTAAPPAVAHALRESLRLIGGTEGDQRRKQLQQLISQLRSQLAELIAAQPALGWHLADSSTAIQPLIVGSNEAALALAAALDAQGLWVPAIRPPTVPAGTARLRITLSASHSADDVRQLVDALAQAGKDLAGAQP</sequence>
<comment type="function">
    <text evidence="1">Catalyzes the decarboxylative condensation of pimeloyl-[acyl-carrier protein] and L-alanine to produce 8-amino-7-oxononanoate (AON), [acyl-carrier protein], and carbon dioxide.</text>
</comment>
<comment type="catalytic activity">
    <reaction evidence="1">
        <text>6-carboxyhexanoyl-[ACP] + L-alanine + H(+) = (8S)-8-amino-7-oxononanoate + holo-[ACP] + CO2</text>
        <dbReference type="Rhea" id="RHEA:42288"/>
        <dbReference type="Rhea" id="RHEA-COMP:9685"/>
        <dbReference type="Rhea" id="RHEA-COMP:9955"/>
        <dbReference type="ChEBI" id="CHEBI:15378"/>
        <dbReference type="ChEBI" id="CHEBI:16526"/>
        <dbReference type="ChEBI" id="CHEBI:57972"/>
        <dbReference type="ChEBI" id="CHEBI:64479"/>
        <dbReference type="ChEBI" id="CHEBI:78846"/>
        <dbReference type="ChEBI" id="CHEBI:149468"/>
        <dbReference type="EC" id="2.3.1.47"/>
    </reaction>
</comment>
<comment type="cofactor">
    <cofactor evidence="1">
        <name>pyridoxal 5'-phosphate</name>
        <dbReference type="ChEBI" id="CHEBI:597326"/>
    </cofactor>
</comment>
<comment type="pathway">
    <text evidence="1">Cofactor biosynthesis; biotin biosynthesis.</text>
</comment>
<comment type="subunit">
    <text evidence="1">Homodimer.</text>
</comment>
<comment type="similarity">
    <text evidence="1">Belongs to the class-II pyridoxal-phosphate-dependent aminotransferase family. BioF subfamily.</text>
</comment>
<comment type="sequence caution" evidence="2">
    <conflict type="erroneous initiation">
        <sequence resource="EMBL-CDS" id="ABM39324"/>
    </conflict>
</comment>
<protein>
    <recommendedName>
        <fullName evidence="1">8-amino-7-oxononanoate synthase</fullName>
        <shortName evidence="1">AONS</shortName>
        <ecNumber evidence="1">2.3.1.47</ecNumber>
    </recommendedName>
    <alternativeName>
        <fullName evidence="1">7-keto-8-amino-pelargonic acid synthase</fullName>
        <shortName evidence="1">7-KAP synthase</shortName>
        <shortName evidence="1">KAPA synthase</shortName>
    </alternativeName>
    <alternativeName>
        <fullName evidence="1">8-amino-7-ketopelargonate synthase</fullName>
    </alternativeName>
</protein>
<feature type="chain" id="PRO_0000381067" description="8-amino-7-oxononanoate synthase">
    <location>
        <begin position="1"/>
        <end position="409"/>
    </location>
</feature>
<feature type="binding site" evidence="1">
    <location>
        <position position="20"/>
    </location>
    <ligand>
        <name>substrate</name>
    </ligand>
</feature>
<feature type="binding site" evidence="1">
    <location>
        <begin position="116"/>
        <end position="117"/>
    </location>
    <ligand>
        <name>pyridoxal 5'-phosphate</name>
        <dbReference type="ChEBI" id="CHEBI:597326"/>
    </ligand>
</feature>
<feature type="binding site" evidence="1">
    <location>
        <position position="141"/>
    </location>
    <ligand>
        <name>substrate</name>
    </ligand>
</feature>
<feature type="binding site" evidence="1">
    <location>
        <position position="187"/>
    </location>
    <ligand>
        <name>pyridoxal 5'-phosphate</name>
        <dbReference type="ChEBI" id="CHEBI:597326"/>
    </ligand>
</feature>
<feature type="binding site" evidence="1">
    <location>
        <position position="215"/>
    </location>
    <ligand>
        <name>pyridoxal 5'-phosphate</name>
        <dbReference type="ChEBI" id="CHEBI:597326"/>
    </ligand>
</feature>
<feature type="binding site" evidence="1">
    <location>
        <position position="243"/>
    </location>
    <ligand>
        <name>pyridoxal 5'-phosphate</name>
        <dbReference type="ChEBI" id="CHEBI:597326"/>
    </ligand>
</feature>
<feature type="binding site" evidence="1">
    <location>
        <position position="369"/>
    </location>
    <ligand>
        <name>substrate</name>
    </ligand>
</feature>
<feature type="modified residue" description="N6-(pyridoxal phosphate)lysine" evidence="1">
    <location>
        <position position="246"/>
    </location>
</feature>
<proteinExistence type="inferred from homology"/>
<name>BIOF_POLNA</name>
<accession>A1VUJ6</accession>
<dbReference type="EC" id="2.3.1.47" evidence="1"/>
<dbReference type="EMBL" id="CP000529">
    <property type="protein sequence ID" value="ABM39324.1"/>
    <property type="status" value="ALT_INIT"/>
    <property type="molecule type" value="Genomic_DNA"/>
</dbReference>
<dbReference type="RefSeq" id="WP_041376851.1">
    <property type="nucleotide sequence ID" value="NC_008781.1"/>
</dbReference>
<dbReference type="SMR" id="A1VUJ6"/>
<dbReference type="STRING" id="365044.Pnap_4032"/>
<dbReference type="KEGG" id="pna:Pnap_4032"/>
<dbReference type="eggNOG" id="COG0156">
    <property type="taxonomic scope" value="Bacteria"/>
</dbReference>
<dbReference type="HOGENOM" id="CLU_015846_11_2_4"/>
<dbReference type="OrthoDB" id="9807157at2"/>
<dbReference type="UniPathway" id="UPA00078"/>
<dbReference type="Proteomes" id="UP000000644">
    <property type="component" value="Chromosome"/>
</dbReference>
<dbReference type="GO" id="GO:0008710">
    <property type="term" value="F:8-amino-7-oxononanoate synthase activity"/>
    <property type="evidence" value="ECO:0007669"/>
    <property type="project" value="UniProtKB-UniRule"/>
</dbReference>
<dbReference type="GO" id="GO:0030170">
    <property type="term" value="F:pyridoxal phosphate binding"/>
    <property type="evidence" value="ECO:0007669"/>
    <property type="project" value="UniProtKB-UniRule"/>
</dbReference>
<dbReference type="GO" id="GO:0009102">
    <property type="term" value="P:biotin biosynthetic process"/>
    <property type="evidence" value="ECO:0007669"/>
    <property type="project" value="UniProtKB-UniRule"/>
</dbReference>
<dbReference type="CDD" id="cd06454">
    <property type="entry name" value="KBL_like"/>
    <property type="match status" value="1"/>
</dbReference>
<dbReference type="Gene3D" id="3.90.1150.10">
    <property type="entry name" value="Aspartate Aminotransferase, domain 1"/>
    <property type="match status" value="1"/>
</dbReference>
<dbReference type="Gene3D" id="3.40.640.10">
    <property type="entry name" value="Type I PLP-dependent aspartate aminotransferase-like (Major domain)"/>
    <property type="match status" value="1"/>
</dbReference>
<dbReference type="HAMAP" id="MF_01693">
    <property type="entry name" value="BioF_aminotrans_2"/>
    <property type="match status" value="1"/>
</dbReference>
<dbReference type="InterPro" id="IPR004839">
    <property type="entry name" value="Aminotransferase_I/II_large"/>
</dbReference>
<dbReference type="InterPro" id="IPR050087">
    <property type="entry name" value="AON_synthase_class-II"/>
</dbReference>
<dbReference type="InterPro" id="IPR004723">
    <property type="entry name" value="AONS_Archaea/Proteobacteria"/>
</dbReference>
<dbReference type="InterPro" id="IPR022834">
    <property type="entry name" value="AONS_Proteobacteria"/>
</dbReference>
<dbReference type="InterPro" id="IPR015424">
    <property type="entry name" value="PyrdxlP-dep_Trfase"/>
</dbReference>
<dbReference type="InterPro" id="IPR015421">
    <property type="entry name" value="PyrdxlP-dep_Trfase_major"/>
</dbReference>
<dbReference type="InterPro" id="IPR015422">
    <property type="entry name" value="PyrdxlP-dep_Trfase_small"/>
</dbReference>
<dbReference type="NCBIfam" id="TIGR00858">
    <property type="entry name" value="bioF"/>
    <property type="match status" value="1"/>
</dbReference>
<dbReference type="PANTHER" id="PTHR13693:SF100">
    <property type="entry name" value="8-AMINO-7-OXONONANOATE SYNTHASE"/>
    <property type="match status" value="1"/>
</dbReference>
<dbReference type="PANTHER" id="PTHR13693">
    <property type="entry name" value="CLASS II AMINOTRANSFERASE/8-AMINO-7-OXONONANOATE SYNTHASE"/>
    <property type="match status" value="1"/>
</dbReference>
<dbReference type="Pfam" id="PF00155">
    <property type="entry name" value="Aminotran_1_2"/>
    <property type="match status" value="1"/>
</dbReference>
<dbReference type="SUPFAM" id="SSF53383">
    <property type="entry name" value="PLP-dependent transferases"/>
    <property type="match status" value="1"/>
</dbReference>